<gene>
    <name evidence="1" type="primary">tpiA</name>
    <name type="ordered locus">P9301_10411</name>
</gene>
<protein>
    <recommendedName>
        <fullName evidence="1">Triosephosphate isomerase</fullName>
        <shortName evidence="1">TIM</shortName>
        <shortName evidence="1">TPI</shortName>
        <ecNumber evidence="1">5.3.1.1</ecNumber>
    </recommendedName>
    <alternativeName>
        <fullName evidence="1">Triose-phosphate isomerase</fullName>
    </alternativeName>
</protein>
<feature type="chain" id="PRO_0000307524" description="Triosephosphate isomerase">
    <location>
        <begin position="1"/>
        <end position="241"/>
    </location>
</feature>
<feature type="active site" description="Electrophile" evidence="1">
    <location>
        <position position="96"/>
    </location>
</feature>
<feature type="active site" description="Proton acceptor" evidence="1">
    <location>
        <position position="165"/>
    </location>
</feature>
<feature type="binding site" evidence="1">
    <location>
        <begin position="9"/>
        <end position="11"/>
    </location>
    <ligand>
        <name>substrate</name>
    </ligand>
</feature>
<feature type="binding site" evidence="1">
    <location>
        <position position="171"/>
    </location>
    <ligand>
        <name>substrate</name>
    </ligand>
</feature>
<feature type="binding site" evidence="1">
    <location>
        <position position="204"/>
    </location>
    <ligand>
        <name>substrate</name>
    </ligand>
</feature>
<feature type="binding site" evidence="1">
    <location>
        <begin position="225"/>
        <end position="226"/>
    </location>
    <ligand>
        <name>substrate</name>
    </ligand>
</feature>
<name>TPIS_PROM0</name>
<sequence>MRKSVIAGNWKMHMTCAEAKSYLEEFIPLIKNIKDDRKVVIAPPFTAISTFSDHSDFEYLDISSQNIHWEDQGAFTAEISPKMLLEHGVSYAIVGHSEPRKYFSESDEQINKRAVFAQSSGLTPIVCVGETLEQRERGEADRVITRQVEQGLENTDPSNLIVAYEPIWAIGTGKTCEAEDANKICSLIRKLIGFDDVIIQYGGSVKPNNIDEIMSMSDIDGVLVGGASLDPNSFARIANYQ</sequence>
<proteinExistence type="inferred from homology"/>
<dbReference type="EC" id="5.3.1.1" evidence="1"/>
<dbReference type="EMBL" id="CP000576">
    <property type="protein sequence ID" value="ABO17664.1"/>
    <property type="molecule type" value="Genomic_DNA"/>
</dbReference>
<dbReference type="RefSeq" id="WP_011863005.1">
    <property type="nucleotide sequence ID" value="NC_009091.1"/>
</dbReference>
<dbReference type="SMR" id="A3PD39"/>
<dbReference type="STRING" id="167546.P9301_10411"/>
<dbReference type="KEGG" id="pmg:P9301_10411"/>
<dbReference type="eggNOG" id="COG0149">
    <property type="taxonomic scope" value="Bacteria"/>
</dbReference>
<dbReference type="HOGENOM" id="CLU_024251_2_3_3"/>
<dbReference type="OrthoDB" id="9809429at2"/>
<dbReference type="UniPathway" id="UPA00109">
    <property type="reaction ID" value="UER00189"/>
</dbReference>
<dbReference type="UniPathway" id="UPA00138"/>
<dbReference type="Proteomes" id="UP000001430">
    <property type="component" value="Chromosome"/>
</dbReference>
<dbReference type="GO" id="GO:0005829">
    <property type="term" value="C:cytosol"/>
    <property type="evidence" value="ECO:0007669"/>
    <property type="project" value="TreeGrafter"/>
</dbReference>
<dbReference type="GO" id="GO:0004807">
    <property type="term" value="F:triose-phosphate isomerase activity"/>
    <property type="evidence" value="ECO:0007669"/>
    <property type="project" value="UniProtKB-UniRule"/>
</dbReference>
<dbReference type="GO" id="GO:0006094">
    <property type="term" value="P:gluconeogenesis"/>
    <property type="evidence" value="ECO:0007669"/>
    <property type="project" value="UniProtKB-UniRule"/>
</dbReference>
<dbReference type="GO" id="GO:0046166">
    <property type="term" value="P:glyceraldehyde-3-phosphate biosynthetic process"/>
    <property type="evidence" value="ECO:0007669"/>
    <property type="project" value="TreeGrafter"/>
</dbReference>
<dbReference type="GO" id="GO:0019563">
    <property type="term" value="P:glycerol catabolic process"/>
    <property type="evidence" value="ECO:0007669"/>
    <property type="project" value="TreeGrafter"/>
</dbReference>
<dbReference type="GO" id="GO:0006096">
    <property type="term" value="P:glycolytic process"/>
    <property type="evidence" value="ECO:0007669"/>
    <property type="project" value="UniProtKB-UniRule"/>
</dbReference>
<dbReference type="CDD" id="cd00311">
    <property type="entry name" value="TIM"/>
    <property type="match status" value="1"/>
</dbReference>
<dbReference type="FunFam" id="3.20.20.70:FF:000016">
    <property type="entry name" value="Triosephosphate isomerase"/>
    <property type="match status" value="1"/>
</dbReference>
<dbReference type="Gene3D" id="3.20.20.70">
    <property type="entry name" value="Aldolase class I"/>
    <property type="match status" value="1"/>
</dbReference>
<dbReference type="HAMAP" id="MF_00147_B">
    <property type="entry name" value="TIM_B"/>
    <property type="match status" value="1"/>
</dbReference>
<dbReference type="InterPro" id="IPR013785">
    <property type="entry name" value="Aldolase_TIM"/>
</dbReference>
<dbReference type="InterPro" id="IPR035990">
    <property type="entry name" value="TIM_sf"/>
</dbReference>
<dbReference type="InterPro" id="IPR022896">
    <property type="entry name" value="TrioseP_Isoase_bac/euk"/>
</dbReference>
<dbReference type="InterPro" id="IPR000652">
    <property type="entry name" value="Triosephosphate_isomerase"/>
</dbReference>
<dbReference type="InterPro" id="IPR020861">
    <property type="entry name" value="Triosephosphate_isomerase_AS"/>
</dbReference>
<dbReference type="NCBIfam" id="TIGR00419">
    <property type="entry name" value="tim"/>
    <property type="match status" value="1"/>
</dbReference>
<dbReference type="PANTHER" id="PTHR21139">
    <property type="entry name" value="TRIOSEPHOSPHATE ISOMERASE"/>
    <property type="match status" value="1"/>
</dbReference>
<dbReference type="PANTHER" id="PTHR21139:SF42">
    <property type="entry name" value="TRIOSEPHOSPHATE ISOMERASE"/>
    <property type="match status" value="1"/>
</dbReference>
<dbReference type="Pfam" id="PF00121">
    <property type="entry name" value="TIM"/>
    <property type="match status" value="1"/>
</dbReference>
<dbReference type="SUPFAM" id="SSF51351">
    <property type="entry name" value="Triosephosphate isomerase (TIM)"/>
    <property type="match status" value="1"/>
</dbReference>
<dbReference type="PROSITE" id="PS00171">
    <property type="entry name" value="TIM_1"/>
    <property type="match status" value="1"/>
</dbReference>
<dbReference type="PROSITE" id="PS51440">
    <property type="entry name" value="TIM_2"/>
    <property type="match status" value="1"/>
</dbReference>
<evidence type="ECO:0000255" key="1">
    <source>
        <dbReference type="HAMAP-Rule" id="MF_00147"/>
    </source>
</evidence>
<reference key="1">
    <citation type="journal article" date="2007" name="PLoS Genet.">
        <title>Patterns and implications of gene gain and loss in the evolution of Prochlorococcus.</title>
        <authorList>
            <person name="Kettler G.C."/>
            <person name="Martiny A.C."/>
            <person name="Huang K."/>
            <person name="Zucker J."/>
            <person name="Coleman M.L."/>
            <person name="Rodrigue S."/>
            <person name="Chen F."/>
            <person name="Lapidus A."/>
            <person name="Ferriera S."/>
            <person name="Johnson J."/>
            <person name="Steglich C."/>
            <person name="Church G.M."/>
            <person name="Richardson P."/>
            <person name="Chisholm S.W."/>
        </authorList>
    </citation>
    <scope>NUCLEOTIDE SEQUENCE [LARGE SCALE GENOMIC DNA]</scope>
    <source>
        <strain>MIT 9301</strain>
    </source>
</reference>
<comment type="function">
    <text evidence="1">Involved in the gluconeogenesis. Catalyzes stereospecifically the conversion of dihydroxyacetone phosphate (DHAP) to D-glyceraldehyde-3-phosphate (G3P).</text>
</comment>
<comment type="catalytic activity">
    <reaction evidence="1">
        <text>D-glyceraldehyde 3-phosphate = dihydroxyacetone phosphate</text>
        <dbReference type="Rhea" id="RHEA:18585"/>
        <dbReference type="ChEBI" id="CHEBI:57642"/>
        <dbReference type="ChEBI" id="CHEBI:59776"/>
        <dbReference type="EC" id="5.3.1.1"/>
    </reaction>
</comment>
<comment type="pathway">
    <text evidence="1">Carbohydrate biosynthesis; gluconeogenesis.</text>
</comment>
<comment type="pathway">
    <text evidence="1">Carbohydrate degradation; glycolysis; D-glyceraldehyde 3-phosphate from glycerone phosphate: step 1/1.</text>
</comment>
<comment type="subunit">
    <text evidence="1">Homodimer.</text>
</comment>
<comment type="subcellular location">
    <subcellularLocation>
        <location evidence="1">Cytoplasm</location>
    </subcellularLocation>
</comment>
<comment type="similarity">
    <text evidence="1">Belongs to the triosephosphate isomerase family.</text>
</comment>
<accession>A3PD39</accession>
<organism>
    <name type="scientific">Prochlorococcus marinus (strain MIT 9301)</name>
    <dbReference type="NCBI Taxonomy" id="167546"/>
    <lineage>
        <taxon>Bacteria</taxon>
        <taxon>Bacillati</taxon>
        <taxon>Cyanobacteriota</taxon>
        <taxon>Cyanophyceae</taxon>
        <taxon>Synechococcales</taxon>
        <taxon>Prochlorococcaceae</taxon>
        <taxon>Prochlorococcus</taxon>
    </lineage>
</organism>
<keyword id="KW-0963">Cytoplasm</keyword>
<keyword id="KW-0312">Gluconeogenesis</keyword>
<keyword id="KW-0324">Glycolysis</keyword>
<keyword id="KW-0413">Isomerase</keyword>
<keyword id="KW-1185">Reference proteome</keyword>